<sequence>MFLKNIFIALAIALLVDASPAKRSPGFVTLDFDVIKTPVNATGQEGKVKRQAIPVTLNNEHVSYAADITIGSNKQKFNVIVDTGSSDLWVPDASVTCDKPRPGQSADFCKGKGIYTPKSSTTSQNLGTPFYIGYGDGSSSQGTLYKDTVGFGGASITKQVFADITKTSIPQGILGIGYKTNEAAGDYDNVPVTLKNQGVIAKNAYSLYLNSPNAATGQIIFGGVDKAKYSGSLIAVPVTSDRELRITLNSLKAVGKNINGNIDVLLDSGTTITYLQQDVAQDIIDAFQAELKSDGQGHTFYVTDCQTSGTVDFNFDNNAKISVPASEFTAPLSYANGQPYPKCQLLLGISDANILGDNFLRSAYLVYDLDDDKISLAQVKYTSASNIAALT</sequence>
<evidence type="ECO:0000250" key="1">
    <source>
        <dbReference type="UniProtKB" id="P0CS83"/>
    </source>
</evidence>
<evidence type="ECO:0000250" key="2">
    <source>
        <dbReference type="UniProtKB" id="P0CY29"/>
    </source>
</evidence>
<evidence type="ECO:0000255" key="3"/>
<evidence type="ECO:0000255" key="4">
    <source>
        <dbReference type="PROSITE-ProRule" id="PRU01103"/>
    </source>
</evidence>
<evidence type="ECO:0000269" key="5">
    <source>
    </source>
</evidence>
<evidence type="ECO:0000269" key="6">
    <source>
    </source>
</evidence>
<evidence type="ECO:0000269" key="7">
    <source>
    </source>
</evidence>
<evidence type="ECO:0000269" key="8">
    <source>
    </source>
</evidence>
<evidence type="ECO:0000269" key="9">
    <source>
    </source>
</evidence>
<evidence type="ECO:0000269" key="10">
    <source>
    </source>
</evidence>
<evidence type="ECO:0000269" key="11">
    <source>
    </source>
</evidence>
<evidence type="ECO:0000269" key="12">
    <source>
    </source>
</evidence>
<evidence type="ECO:0000269" key="13">
    <source>
    </source>
</evidence>
<evidence type="ECO:0000269" key="14">
    <source>
    </source>
</evidence>
<evidence type="ECO:0000269" key="15">
    <source>
    </source>
</evidence>
<evidence type="ECO:0000269" key="16">
    <source>
    </source>
</evidence>
<evidence type="ECO:0000269" key="17">
    <source>
    </source>
</evidence>
<evidence type="ECO:0000269" key="18">
    <source>
    </source>
</evidence>
<evidence type="ECO:0000269" key="19">
    <source>
    </source>
</evidence>
<evidence type="ECO:0000269" key="20">
    <source>
    </source>
</evidence>
<evidence type="ECO:0000269" key="21">
    <source>
    </source>
</evidence>
<evidence type="ECO:0000269" key="22">
    <source>
    </source>
</evidence>
<evidence type="ECO:0000269" key="23">
    <source>
    </source>
</evidence>
<evidence type="ECO:0000269" key="24">
    <source>
    </source>
</evidence>
<evidence type="ECO:0000269" key="25">
    <source>
    </source>
</evidence>
<evidence type="ECO:0000303" key="26">
    <source>
    </source>
</evidence>
<evidence type="ECO:0000303" key="27">
    <source>
    </source>
</evidence>
<evidence type="ECO:0000303" key="28">
    <source>
    </source>
</evidence>
<evidence type="ECO:0000303" key="29">
    <source>
    </source>
</evidence>
<evidence type="ECO:0000305" key="30"/>
<evidence type="ECO:0007829" key="31">
    <source>
        <dbReference type="PDB" id="2QZW"/>
    </source>
</evidence>
<accession>P0CY27</accession>
<accession>A0A1D8PQ68</accession>
<accession>P28872</accession>
<accession>Q5A8N4</accession>
<feature type="signal peptide" evidence="3">
    <location>
        <begin position="1"/>
        <end position="18"/>
    </location>
</feature>
<feature type="propeptide" id="PRO_0000413044" description="Activation peptide" evidence="30">
    <location>
        <begin position="19"/>
        <end position="50"/>
    </location>
</feature>
<feature type="chain" id="PRO_0000413045" description="Secreted aspartic protease 1">
    <location>
        <begin position="51"/>
        <end position="391"/>
    </location>
</feature>
<feature type="domain" description="Peptidase A1" evidence="4">
    <location>
        <begin position="64"/>
        <end position="377"/>
    </location>
</feature>
<feature type="active site" evidence="4">
    <location>
        <position position="82"/>
    </location>
</feature>
<feature type="active site" evidence="4">
    <location>
        <position position="267"/>
    </location>
</feature>
<feature type="binding site" evidence="2">
    <location>
        <begin position="82"/>
        <end position="84"/>
    </location>
    <ligand>
        <name>pepstatin A</name>
        <dbReference type="ChEBI" id="CHEBI:190525"/>
        <note>inhibitor</note>
    </ligand>
</feature>
<feature type="binding site" evidence="2">
    <location>
        <begin position="135"/>
        <end position="136"/>
    </location>
    <ligand>
        <name>pepstatin A</name>
        <dbReference type="ChEBI" id="CHEBI:190525"/>
        <note>inhibitor</note>
    </ligand>
</feature>
<feature type="binding site" evidence="2">
    <location>
        <position position="241"/>
    </location>
    <ligand>
        <name>Zn(2+)</name>
        <dbReference type="ChEBI" id="CHEBI:29105"/>
    </ligand>
</feature>
<feature type="binding site" evidence="2">
    <location>
        <position position="263"/>
    </location>
    <ligand>
        <name>Zn(2+)</name>
        <dbReference type="ChEBI" id="CHEBI:29105"/>
    </ligand>
</feature>
<feature type="binding site" evidence="2">
    <location>
        <begin position="267"/>
        <end position="271"/>
    </location>
    <ligand>
        <name>pepstatin A</name>
        <dbReference type="ChEBI" id="CHEBI:190525"/>
        <note>inhibitor</note>
    </ligand>
</feature>
<feature type="glycosylation site" description="N-linked (GlcNAc...) asparagine" evidence="3">
    <location>
        <position position="40"/>
    </location>
</feature>
<feature type="disulfide bond" evidence="14">
    <location>
        <begin position="97"/>
        <end position="109"/>
    </location>
</feature>
<feature type="disulfide bond" evidence="14">
    <location>
        <begin position="305"/>
        <end position="343"/>
    </location>
</feature>
<feature type="strand" evidence="31">
    <location>
        <begin position="53"/>
        <end position="59"/>
    </location>
</feature>
<feature type="strand" evidence="31">
    <location>
        <begin position="64"/>
        <end position="70"/>
    </location>
</feature>
<feature type="turn" evidence="31">
    <location>
        <begin position="71"/>
        <end position="74"/>
    </location>
</feature>
<feature type="strand" evidence="31">
    <location>
        <begin position="75"/>
        <end position="82"/>
    </location>
</feature>
<feature type="strand" evidence="31">
    <location>
        <begin position="88"/>
        <end position="97"/>
    </location>
</feature>
<feature type="turn" evidence="31">
    <location>
        <begin position="106"/>
        <end position="109"/>
    </location>
</feature>
<feature type="helix" evidence="31">
    <location>
        <begin position="117"/>
        <end position="119"/>
    </location>
</feature>
<feature type="strand" evidence="31">
    <location>
        <begin position="124"/>
        <end position="133"/>
    </location>
</feature>
<feature type="strand" evidence="31">
    <location>
        <begin position="139"/>
        <end position="151"/>
    </location>
</feature>
<feature type="strand" evidence="31">
    <location>
        <begin position="154"/>
        <end position="171"/>
    </location>
</feature>
<feature type="strand" evidence="31">
    <location>
        <begin position="173"/>
        <end position="175"/>
    </location>
</feature>
<feature type="helix" evidence="31">
    <location>
        <begin position="179"/>
        <end position="181"/>
    </location>
</feature>
<feature type="strand" evidence="31">
    <location>
        <begin position="183"/>
        <end position="186"/>
    </location>
</feature>
<feature type="helix" evidence="31">
    <location>
        <begin position="190"/>
        <end position="196"/>
    </location>
</feature>
<feature type="strand" evidence="31">
    <location>
        <begin position="199"/>
        <end position="208"/>
    </location>
</feature>
<feature type="strand" evidence="31">
    <location>
        <begin position="215"/>
        <end position="221"/>
    </location>
</feature>
<feature type="strand" evidence="31">
    <location>
        <begin position="223"/>
        <end position="225"/>
    </location>
</feature>
<feature type="strand" evidence="31">
    <location>
        <begin position="228"/>
        <end position="231"/>
    </location>
</feature>
<feature type="strand" evidence="31">
    <location>
        <begin position="234"/>
        <end position="237"/>
    </location>
</feature>
<feature type="strand" evidence="31">
    <location>
        <begin position="241"/>
        <end position="243"/>
    </location>
</feature>
<feature type="strand" evidence="31">
    <location>
        <begin position="245"/>
        <end position="253"/>
    </location>
</feature>
<feature type="strand" evidence="31">
    <location>
        <begin position="256"/>
        <end position="266"/>
    </location>
</feature>
<feature type="strand" evidence="31">
    <location>
        <begin position="271"/>
        <end position="275"/>
    </location>
</feature>
<feature type="helix" evidence="31">
    <location>
        <begin position="277"/>
        <end position="287"/>
    </location>
</feature>
<feature type="strand" evidence="31">
    <location>
        <begin position="290"/>
        <end position="292"/>
    </location>
</feature>
<feature type="strand" evidence="31">
    <location>
        <begin position="295"/>
        <end position="297"/>
    </location>
</feature>
<feature type="strand" evidence="31">
    <location>
        <begin position="300"/>
        <end position="303"/>
    </location>
</feature>
<feature type="strand" evidence="31">
    <location>
        <begin position="310"/>
        <end position="316"/>
    </location>
</feature>
<feature type="strand" evidence="31">
    <location>
        <begin position="320"/>
        <end position="324"/>
    </location>
</feature>
<feature type="helix" evidence="31">
    <location>
        <begin position="325"/>
        <end position="328"/>
    </location>
</feature>
<feature type="strand" evidence="31">
    <location>
        <begin position="341"/>
        <end position="345"/>
    </location>
</feature>
<feature type="strand" evidence="31">
    <location>
        <begin position="347"/>
        <end position="349"/>
    </location>
</feature>
<feature type="helix" evidence="31">
    <location>
        <begin position="357"/>
        <end position="360"/>
    </location>
</feature>
<feature type="strand" evidence="31">
    <location>
        <begin position="363"/>
        <end position="368"/>
    </location>
</feature>
<feature type="turn" evidence="31">
    <location>
        <begin position="369"/>
        <end position="372"/>
    </location>
</feature>
<feature type="strand" evidence="31">
    <location>
        <begin position="373"/>
        <end position="379"/>
    </location>
</feature>
<feature type="strand" evidence="31">
    <location>
        <begin position="387"/>
        <end position="389"/>
    </location>
</feature>
<gene>
    <name evidence="28" type="primary">SAP1</name>
    <name evidence="27" type="synonym">PEP1</name>
    <name evidence="29" type="synonym">PEP10</name>
    <name evidence="26" type="synonym">PRA10</name>
    <name type="ordered locus">CAALFM_C603490CA</name>
    <name type="ORF">CaO19.13137</name>
    <name type="ORF">CaO19.5714</name>
</gene>
<keyword id="KW-0002">3D-structure</keyword>
<keyword id="KW-0064">Aspartyl protease</keyword>
<keyword id="KW-0165">Cleavage on pair of basic residues</keyword>
<keyword id="KW-1015">Disulfide bond</keyword>
<keyword id="KW-0325">Glycoprotein</keyword>
<keyword id="KW-0378">Hydrolase</keyword>
<keyword id="KW-0479">Metal-binding</keyword>
<keyword id="KW-0645">Protease</keyword>
<keyword id="KW-1185">Reference proteome</keyword>
<keyword id="KW-0964">Secreted</keyword>
<keyword id="KW-0732">Signal</keyword>
<keyword id="KW-0843">Virulence</keyword>
<keyword id="KW-0862">Zinc</keyword>
<keyword id="KW-0865">Zymogen</keyword>
<proteinExistence type="evidence at protein level"/>
<dbReference type="EC" id="3.4.23.24" evidence="17 22 24 25"/>
<dbReference type="EMBL" id="CP017628">
    <property type="protein sequence ID" value="AOW30279.1"/>
    <property type="molecule type" value="Genomic_DNA"/>
</dbReference>
<dbReference type="RefSeq" id="XP_718053.2">
    <property type="nucleotide sequence ID" value="XM_712960.2"/>
</dbReference>
<dbReference type="PDB" id="2QZW">
    <property type="method" value="X-ray"/>
    <property type="resolution" value="2.05 A"/>
    <property type="chains" value="A/B=51-391"/>
</dbReference>
<dbReference type="PDBsum" id="2QZW"/>
<dbReference type="SMR" id="P0CY27"/>
<dbReference type="STRING" id="237561.P0CY27"/>
<dbReference type="MEROPS" id="A01.014"/>
<dbReference type="GlyCosmos" id="P0CY27">
    <property type="glycosylation" value="1 site, No reported glycans"/>
</dbReference>
<dbReference type="EnsemblFungi" id="C6_03490C_A-T">
    <property type="protein sequence ID" value="C6_03490C_A-T-p1"/>
    <property type="gene ID" value="C6_03490C_A"/>
</dbReference>
<dbReference type="GeneID" id="3640256"/>
<dbReference type="KEGG" id="cal:CAALFM_C603490CA"/>
<dbReference type="CGD" id="CAL0000189556">
    <property type="gene designation" value="SAP1"/>
</dbReference>
<dbReference type="VEuPathDB" id="FungiDB:C6_03490C_A"/>
<dbReference type="eggNOG" id="KOG1339">
    <property type="taxonomic scope" value="Eukaryota"/>
</dbReference>
<dbReference type="HOGENOM" id="CLU_013253_9_1_1"/>
<dbReference type="InParanoid" id="P0CY27"/>
<dbReference type="OMA" id="GIGYKTN"/>
<dbReference type="OrthoDB" id="771136at2759"/>
<dbReference type="BRENDA" id="3.4.23.24">
    <property type="organism ID" value="1096"/>
</dbReference>
<dbReference type="EvolutionaryTrace" id="P0CY27"/>
<dbReference type="PHI-base" id="PHI:6783"/>
<dbReference type="PHI-base" id="PHI:6789"/>
<dbReference type="PHI-base" id="PHI:6811"/>
<dbReference type="PRO" id="PR:P0CY27"/>
<dbReference type="Proteomes" id="UP000000559">
    <property type="component" value="Chromosome 6"/>
</dbReference>
<dbReference type="GO" id="GO:0005576">
    <property type="term" value="C:extracellular region"/>
    <property type="evidence" value="ECO:0000314"/>
    <property type="project" value="CGD"/>
</dbReference>
<dbReference type="GO" id="GO:0009277">
    <property type="term" value="C:fungal-type cell wall"/>
    <property type="evidence" value="ECO:0000318"/>
    <property type="project" value="GO_Central"/>
</dbReference>
<dbReference type="GO" id="GO:0004190">
    <property type="term" value="F:aspartic-type endopeptidase activity"/>
    <property type="evidence" value="ECO:0000314"/>
    <property type="project" value="UniProtKB"/>
</dbReference>
<dbReference type="GO" id="GO:0046872">
    <property type="term" value="F:metal ion binding"/>
    <property type="evidence" value="ECO:0007669"/>
    <property type="project" value="UniProtKB-KW"/>
</dbReference>
<dbReference type="GO" id="GO:0044406">
    <property type="term" value="P:adhesion of symbiont to host"/>
    <property type="evidence" value="ECO:0000315"/>
    <property type="project" value="CGD"/>
</dbReference>
<dbReference type="GO" id="GO:0031505">
    <property type="term" value="P:fungal-type cell wall organization"/>
    <property type="evidence" value="ECO:0000318"/>
    <property type="project" value="GO_Central"/>
</dbReference>
<dbReference type="GO" id="GO:0030163">
    <property type="term" value="P:protein catabolic process"/>
    <property type="evidence" value="ECO:0000315"/>
    <property type="project" value="CGD"/>
</dbReference>
<dbReference type="GO" id="GO:0006508">
    <property type="term" value="P:proteolysis"/>
    <property type="evidence" value="ECO:0000314"/>
    <property type="project" value="UniProtKB"/>
</dbReference>
<dbReference type="GO" id="GO:0006465">
    <property type="term" value="P:signal peptide processing"/>
    <property type="evidence" value="ECO:0000314"/>
    <property type="project" value="CGD"/>
</dbReference>
<dbReference type="GO" id="GO:0035756">
    <property type="term" value="P:symbiont-mediated migration across host transepithelium"/>
    <property type="evidence" value="ECO:0000315"/>
    <property type="project" value="CGD"/>
</dbReference>
<dbReference type="GO" id="GO:0052553">
    <property type="term" value="P:symbiont-mediated perturbation of host immune response"/>
    <property type="evidence" value="ECO:0000314"/>
    <property type="project" value="CGD"/>
</dbReference>
<dbReference type="CDD" id="cd05474">
    <property type="entry name" value="SAP_like"/>
    <property type="match status" value="1"/>
</dbReference>
<dbReference type="FunFam" id="2.40.70.10:FF:000011">
    <property type="entry name" value="Aspartic protease"/>
    <property type="match status" value="1"/>
</dbReference>
<dbReference type="FunFam" id="2.40.70.10:FF:000023">
    <property type="entry name" value="Aspartic protease"/>
    <property type="match status" value="1"/>
</dbReference>
<dbReference type="Gene3D" id="2.40.70.10">
    <property type="entry name" value="Acid Proteases"/>
    <property type="match status" value="2"/>
</dbReference>
<dbReference type="InterPro" id="IPR001461">
    <property type="entry name" value="Aspartic_peptidase_A1"/>
</dbReference>
<dbReference type="InterPro" id="IPR001969">
    <property type="entry name" value="Aspartic_peptidase_AS"/>
</dbReference>
<dbReference type="InterPro" id="IPR033121">
    <property type="entry name" value="PEPTIDASE_A1"/>
</dbReference>
<dbReference type="InterPro" id="IPR021109">
    <property type="entry name" value="Peptidase_aspartic_dom_sf"/>
</dbReference>
<dbReference type="InterPro" id="IPR033876">
    <property type="entry name" value="SAP-like"/>
</dbReference>
<dbReference type="PANTHER" id="PTHR47966:SF65">
    <property type="entry name" value="ASPARTIC-TYPE ENDOPEPTIDASE"/>
    <property type="match status" value="1"/>
</dbReference>
<dbReference type="PANTHER" id="PTHR47966">
    <property type="entry name" value="BETA-SITE APP-CLEAVING ENZYME, ISOFORM A-RELATED"/>
    <property type="match status" value="1"/>
</dbReference>
<dbReference type="Pfam" id="PF00026">
    <property type="entry name" value="Asp"/>
    <property type="match status" value="1"/>
</dbReference>
<dbReference type="PRINTS" id="PR00792">
    <property type="entry name" value="PEPSIN"/>
</dbReference>
<dbReference type="SUPFAM" id="SSF50630">
    <property type="entry name" value="Acid proteases"/>
    <property type="match status" value="1"/>
</dbReference>
<dbReference type="PROSITE" id="PS00141">
    <property type="entry name" value="ASP_PROTEASE"/>
    <property type="match status" value="2"/>
</dbReference>
<dbReference type="PROSITE" id="PS51767">
    <property type="entry name" value="PEPTIDASE_A1"/>
    <property type="match status" value="1"/>
</dbReference>
<reference key="1">
    <citation type="journal article" date="2004" name="Proc. Natl. Acad. Sci. U.S.A.">
        <title>The diploid genome sequence of Candida albicans.</title>
        <authorList>
            <person name="Jones T."/>
            <person name="Federspiel N.A."/>
            <person name="Chibana H."/>
            <person name="Dungan J."/>
            <person name="Kalman S."/>
            <person name="Magee B.B."/>
            <person name="Newport G."/>
            <person name="Thorstenson Y.R."/>
            <person name="Agabian N."/>
            <person name="Magee P.T."/>
            <person name="Davis R.W."/>
            <person name="Scherer S."/>
        </authorList>
    </citation>
    <scope>NUCLEOTIDE SEQUENCE [LARGE SCALE GENOMIC DNA]</scope>
    <source>
        <strain>SC5314 / ATCC MYA-2876</strain>
    </source>
</reference>
<reference key="2">
    <citation type="journal article" date="2007" name="Genome Biol.">
        <title>Assembly of the Candida albicans genome into sixteen supercontigs aligned on the eight chromosomes.</title>
        <authorList>
            <person name="van het Hoog M."/>
            <person name="Rast T.J."/>
            <person name="Martchenko M."/>
            <person name="Grindle S."/>
            <person name="Dignard D."/>
            <person name="Hogues H."/>
            <person name="Cuomo C."/>
            <person name="Berriman M."/>
            <person name="Scherer S."/>
            <person name="Magee B.B."/>
            <person name="Whiteway M."/>
            <person name="Chibana H."/>
            <person name="Nantel A."/>
            <person name="Magee P.T."/>
        </authorList>
    </citation>
    <scope>GENOME REANNOTATION</scope>
    <source>
        <strain>SC5314 / ATCC MYA-2876</strain>
    </source>
</reference>
<reference key="3">
    <citation type="journal article" date="2013" name="Genome Biol.">
        <title>Assembly of a phased diploid Candida albicans genome facilitates allele-specific measurements and provides a simple model for repeat and indel structure.</title>
        <authorList>
            <person name="Muzzey D."/>
            <person name="Schwartz K."/>
            <person name="Weissman J.S."/>
            <person name="Sherlock G."/>
        </authorList>
    </citation>
    <scope>NUCLEOTIDE SEQUENCE [LARGE SCALE GENOMIC DNA]</scope>
    <scope>GENOME REANNOTATION</scope>
    <source>
        <strain>SC5314 / ATCC MYA-2876</strain>
    </source>
</reference>
<reference key="4">
    <citation type="journal article" date="1992" name="J. Bacteriol.">
        <title>A second gene for a secreted aspartate proteinase in Candida albicans.</title>
        <authorList>
            <person name="Wright R.J."/>
            <person name="Carne A."/>
            <person name="Hieber A.D."/>
            <person name="Lamont I.L."/>
            <person name="Emerson G.W."/>
            <person name="Sullivan P.A."/>
        </authorList>
    </citation>
    <scope>FUNCTION</scope>
</reference>
<reference key="5">
    <citation type="journal article" date="1992" name="Mol. Cell. Biol.">
        <title>Transcription of the gene for a pepsinogen, PEP1, is regulated by white-opaque switching in Candida albicans.</title>
        <authorList>
            <person name="Morrow B."/>
            <person name="Srikantha T."/>
            <person name="Soll D.R."/>
        </authorList>
    </citation>
    <scope>INDUCTION</scope>
</reference>
<reference key="6">
    <citation type="journal article" date="1993" name="Infect. Immun.">
        <title>Heterogeneity of the purified extracellular aspartyl proteinase from Candida albicans: characterization with monoclonal antibodies and N-terminal amino acid sequence analysis.</title>
        <authorList>
            <person name="Morrison C.J."/>
            <person name="Hurst S.F."/>
            <person name="Bragg S.L."/>
            <person name="Kuykendall R.J."/>
            <person name="Diaz H."/>
            <person name="Pohl J."/>
            <person name="Reiss E."/>
        </authorList>
    </citation>
    <scope>SUBCELLULAR LOCATION</scope>
</reference>
<reference key="7">
    <citation type="journal article" date="1993" name="Infect. Immun.">
        <title>The genes encoding the secreted aspartyl proteinases of Candida albicans constitute a family with at least three members.</title>
        <authorList>
            <person name="Magee B.B."/>
            <person name="Hube B."/>
            <person name="Wright R.J."/>
            <person name="Sullivan P.J."/>
            <person name="Magee P.T."/>
        </authorList>
    </citation>
    <scope>IDENTIFICATION</scope>
</reference>
<reference key="8">
    <citation type="journal article" date="1997" name="Microbiology">
        <title>Analysis of secreted aspartic proteinases from Candida albicans: purification and characterization of individual Sap1, Sap2 and Sap3 isoenzymes.</title>
        <authorList>
            <person name="Smolenski G."/>
            <person name="Sullivan P.A."/>
            <person name="Cutfield S.M."/>
            <person name="Cutfield J.F."/>
        </authorList>
    </citation>
    <scope>CATALYTIC ACTIVITY</scope>
    <scope>BIOPHYSICOCHEMICAL PROPERTIES</scope>
</reference>
<reference key="9">
    <citation type="journal article" date="1999" name="Infect. Immun.">
        <title>Misexpression of the opaque-phase-specific gene PEP1 (SAP1) in the white phase of Candida albicans confers increased virulence in a mouse model of cutaneous infection.</title>
        <authorList>
            <person name="Kvaal C."/>
            <person name="Lachke S.A."/>
            <person name="Srikantha T."/>
            <person name="Daniels K."/>
            <person name="McCoy J."/>
            <person name="Soll D.R."/>
        </authorList>
    </citation>
    <scope>INDUCTION</scope>
    <scope>FUNCTION</scope>
</reference>
<reference key="10">
    <citation type="journal article" date="1999" name="J. Infect. Dis.">
        <title>Evidence that members of the secretory aspartyl proteinase gene family, in particular SAP2, are virulence factors for Candida vaginitis.</title>
        <authorList>
            <person name="De Bernardis F."/>
            <person name="Arancia S."/>
            <person name="Morelli L."/>
            <person name="Hube B."/>
            <person name="Sanglard D."/>
            <person name="Schafer W."/>
            <person name="Cassone A."/>
        </authorList>
    </citation>
    <scope>SUBCELLULAR LOCATION</scope>
    <scope>CATALYTIC ACTIVITY</scope>
</reference>
<reference key="11">
    <citation type="journal article" date="2000" name="Microbiology">
        <title>Intra- and intermolecular events direct the propeptide-mediated maturation of the Candida albicans secreted aspartic proteinase Sap1p.</title>
        <authorList>
            <person name="Beggah S."/>
            <person name="Lechenne B."/>
            <person name="Reichard U."/>
            <person name="Foundling S."/>
            <person name="Monod M."/>
        </authorList>
    </citation>
    <scope>SUBCELLULAR LOCATION</scope>
    <scope>PROPEPTIDE</scope>
</reference>
<reference key="12">
    <citation type="journal article" date="2001" name="J. Med. Microbiol.">
        <title>Different isoforms of secreted aspartyl proteinases (Sap) are expressed by Candida albicans during oral and cutaneous candidosis in vivo.</title>
        <authorList>
            <person name="Schaller M."/>
            <person name="Januschke E."/>
            <person name="Schackert C."/>
            <person name="Woerle B."/>
            <person name="Korting H.C."/>
        </authorList>
    </citation>
    <scope>FUNCTION</scope>
</reference>
<reference key="13">
    <citation type="journal article" date="2002" name="J. Mol. Recognit.">
        <title>Analysis of the interaction between the aspartic peptidase inhibitor SQAPI and aspartic peptidases using surface plasmon resonance.</title>
        <authorList>
            <person name="Farley P.C."/>
            <person name="Christeller J.T."/>
            <person name="Sullivan M.E."/>
            <person name="Sullivan P.A."/>
            <person name="Laing W.A."/>
        </authorList>
    </citation>
    <scope>ACTIVITY REGULATION</scope>
</reference>
<reference key="14">
    <citation type="journal article" date="2003" name="Eukaryot. Cell">
        <title>Alpha-pheromone-induced 'shmooing' and gene regulation require white-opaque switching during Candida albicans mating.</title>
        <authorList>
            <person name="Lockhart S.R."/>
            <person name="Zhao R."/>
            <person name="Daniels K.J."/>
            <person name="Soll D.R."/>
        </authorList>
    </citation>
    <scope>INDUCTION</scope>
</reference>
<reference key="15">
    <citation type="journal article" date="2003" name="Infect. Immun.">
        <title>The secreted aspartyl proteinases Sap1 and Sap2 cause tissue damage in an in vitro model of vaginal candidiasis based on reconstituted human vaginal epithelium.</title>
        <authorList>
            <person name="Schaller M."/>
            <person name="Bein M."/>
            <person name="Korting H.C."/>
            <person name="Baur S."/>
            <person name="Hamm G."/>
            <person name="Monod M."/>
            <person name="Beinhauer S."/>
            <person name="Hube B."/>
        </authorList>
    </citation>
    <scope>FUNCTION</scope>
</reference>
<reference key="16">
    <citation type="journal article" date="2005" name="Infect. Immun.">
        <title>Candida albicans-secreted aspartic proteinases modify the epithelial cytokine response in an in vitro model of vaginal candidiasis.</title>
        <authorList>
            <person name="Schaller M."/>
            <person name="Korting H.C."/>
            <person name="Borelli C."/>
            <person name="Hamm G."/>
            <person name="Hube B."/>
        </authorList>
    </citation>
    <scope>FUNCTION</scope>
</reference>
<reference key="17">
    <citation type="journal article" date="2009" name="Mol. Immunol.">
        <title>The yeast Candida albicans evades human complement attack by secretion of aspartic proteases.</title>
        <authorList>
            <person name="Gropp K."/>
            <person name="Schild L."/>
            <person name="Schindler S."/>
            <person name="Hube B."/>
            <person name="Zipfel P.F."/>
            <person name="Skerka C."/>
        </authorList>
    </citation>
    <scope>FUNCTION</scope>
</reference>
<reference key="18">
    <citation type="journal article" date="2010" name="Infect. Immun.">
        <title>The inflammatory response induced by aspartic proteases of Candida albicans is independent of proteolytic activity.</title>
        <authorList>
            <person name="Pietrella D."/>
            <person name="Rachini A."/>
            <person name="Pandey N."/>
            <person name="Schild L."/>
            <person name="Netea M."/>
            <person name="Bistoni F."/>
            <person name="Hube B."/>
            <person name="Vecchiarelli A."/>
        </authorList>
    </citation>
    <scope>FUNCTION</scope>
</reference>
<reference key="19">
    <citation type="journal article" date="2011" name="J. Biochem.">
        <title>Comprehensive characterization of secreted aspartic proteases encoded by a virulence gene family in Candida albicans.</title>
        <authorList>
            <person name="Aoki W."/>
            <person name="Kitahara N."/>
            <person name="Miura N."/>
            <person name="Morisaka H."/>
            <person name="Yamamoto Y."/>
            <person name="Kuroda K."/>
            <person name="Ueda M."/>
        </authorList>
    </citation>
    <scope>CATALYTIC ACTIVITY</scope>
    <scope>BIOPHYSICOCHEMICAL PROPERTIES</scope>
</reference>
<reference key="20">
    <citation type="journal article" date="2012" name="Mycopathologia">
        <title>In vitro Candida albicans biofilm induced proteinase activity and SAP8 expression correlates with in vivo denture stomatitis severity.</title>
        <authorList>
            <person name="Ramage G."/>
            <person name="Coco B."/>
            <person name="Sherry L."/>
            <person name="Bagg J."/>
            <person name="Lappin D.F."/>
        </authorList>
    </citation>
    <scope>FUNCTION</scope>
    <scope>INDUCTION</scope>
</reference>
<reference key="21">
    <citation type="journal article" date="2012" name="Pol. J. Microbiol.">
        <title>In vitro study of secreted aspartyl proteinases Sap1 to Sap3 and Sap4 to Sap6 expression in Candida albicans pleomorphic forms.</title>
        <authorList>
            <person name="Staniszewska M."/>
            <person name="Bondaryk M."/>
            <person name="Siennicka K."/>
            <person name="Kurek A."/>
            <person name="Orlowski J."/>
            <person name="Schaller M."/>
            <person name="Kurzatkowski W."/>
        </authorList>
    </citation>
    <scope>INDUCTION</scope>
</reference>
<reference key="22">
    <citation type="journal article" date="2013" name="Biochem. Pharmacol.">
        <title>Design, synthesis, inhibition studies, and molecular modeling of pepstatin analogues addressing different secreted aspartic proteinases of Candida albicans.</title>
        <authorList>
            <person name="Cadicamo C.D."/>
            <person name="Mortier J."/>
            <person name="Wolber G."/>
            <person name="Hell M."/>
            <person name="Heinrich I.E."/>
            <person name="Michel D."/>
            <person name="Semlin L."/>
            <person name="Berger U."/>
            <person name="Korting H.C."/>
            <person name="Holtje H.D."/>
            <person name="Koksch B."/>
            <person name="Borelli C."/>
        </authorList>
    </citation>
    <scope>ACTIVITY REGULATION</scope>
</reference>
<reference key="23">
    <citation type="journal article" date="2013" name="Peptides">
        <title>Secreted aspartic peptidases of Candida albicans liberate bactericidal hemocidins from human hemoglobin.</title>
        <authorList>
            <person name="Bochenska O."/>
            <person name="Rapala-Kozik M."/>
            <person name="Wolak N."/>
            <person name="Bras G."/>
            <person name="Kozik A."/>
            <person name="Dubin A."/>
            <person name="Aoki W."/>
            <person name="Ueda M."/>
            <person name="Mak P."/>
        </authorList>
    </citation>
    <scope>FUNCTION</scope>
</reference>
<reference key="24">
    <citation type="journal article" date="2016" name="Acta Biochim. Pol.">
        <title>The action of ten secreted aspartic proteases of pathogenic yeast Candida albicans on major human salivary antimicrobial peptide, histatin 5.</title>
        <authorList>
            <person name="Bochenska O."/>
            <person name="Rapala-Kozik M."/>
            <person name="Wolak N."/>
            <person name="Aoki W."/>
            <person name="Ueda M."/>
            <person name="Kozik A."/>
        </authorList>
    </citation>
    <scope>FUNCTION</scope>
    <scope>CATALYTIC ACTIVITY</scope>
    <scope>BIOPHYSICOCHEMICAL PROPERTIES</scope>
</reference>
<reference key="25">
    <citation type="journal article" date="2008" name="Proteins">
        <title>X-ray structures of Sap1 and Sap5: structural comparison of the secreted aspartic proteinases from Candida albicans.</title>
        <authorList>
            <person name="Borelli C."/>
            <person name="Ruge E."/>
            <person name="Lee J.H."/>
            <person name="Schaller M."/>
            <person name="Vogelsang A."/>
            <person name="Monod M."/>
            <person name="Korting H.C."/>
            <person name="Huber R."/>
            <person name="Maskos K."/>
        </authorList>
    </citation>
    <scope>X-RAY CRYSTALLOGRAPHY (2.05 ANGSTROMS) OF 51-391</scope>
    <scope>DISULFIDE BOND</scope>
</reference>
<protein>
    <recommendedName>
        <fullName evidence="28">Secreted aspartic protease 1</fullName>
        <shortName evidence="30">ACP 1</shortName>
        <shortName evidence="30">Aspartate protease 1</shortName>
        <ecNumber evidence="17 22 24 25">3.4.23.24</ecNumber>
    </recommendedName>
    <alternativeName>
        <fullName evidence="30">Candidapepsin-1</fullName>
    </alternativeName>
    <alternativeName>
        <fullName evidence="27">Pepsinogen-1</fullName>
    </alternativeName>
    <alternativeName>
        <fullName evidence="29">Pepsinogen-10</fullName>
    </alternativeName>
</protein>
<comment type="function">
    <text evidence="5 7 9 10 12 15 16 18 21">Secreted aspartic peptidases (SAPs) are a group of ten acidic hydrolases considered as key virulence factors (PubMed:10569787, PubMed:11478679, PubMed:12761103, PubMed:1447155, PubMed:15845479, PubMed:19880183, PubMed:20713630, PubMed:22302440, PubMed:23927842). These enzymes supply the fungus with nutrient amino acids as well as are able to degrade the selected host's proteins involved in the immune defense (PubMed:10569787, PubMed:11478679, PubMed:12761103, PubMed:15845479, PubMed:19880183, PubMed:20713630, PubMed:22302440, PubMed:23927842). Induces host inflammatory cytokine production in a proteolytic activity-independent way (PubMed:20713630). Plays a role in tissue damage during superficial infection (PubMed:12761103). Moreover, acts toward human hemoglobin though limited proteolysis to generate a variety of antimicrobial hemocidins, enabling to compete with the other microorganisms of the same physiological niche using the microbicidal peptides generated from the host protein (PubMed:23927842).</text>
</comment>
<comment type="function">
    <text evidence="17 22">Plays a key role in defense against host by cleaving histatin-5 (Hst 5), a peptide from human saliva that carries out fungicidal activity (PubMed:27390786). The cleavage rate decreases in an order of SAP2 &gt; SAP9 &gt; SAP3 &gt; SAP7 &gt; SAP4 &gt; SAP1 &gt; SAP8 (PubMed:21646240). The first cleavage occurs between residues 'Lys-17' and 'His-18' of Hst 5, giving DSHAKRHHGYKRKFHEK and HHSHRGY peptides (PubMed:27390786). Further fragmentation by SAP1 results in AKRHHGYKRKFHEK and AKRHHGY products (PubMed:27390786).</text>
</comment>
<comment type="catalytic activity">
    <reaction evidence="17 22 24 25">
        <text>Preferential cleavage at the carboxyl of hydrophobic amino acids, but fails to cleave 15-Leu-|-Tyr-16, 16-Tyr-|-Leu-17 and 24-Phe-|-Phe-25 of insulin B chain. Activates trypsinogen, and degrades keratin.</text>
        <dbReference type="EC" id="3.4.23.24"/>
    </reaction>
</comment>
<comment type="activity regulation">
    <text evidence="8 19">Inhibited by pepstatin A analogs and squash aspartic peptidase inhibitor (SQAPI).</text>
</comment>
<comment type="biophysicochemical properties">
    <phDependence>
        <text evidence="17 22 24">Optimum pH is 5.0. using BSA or casein-resorufin as substrates, and 6.0-7.0, the pH of the saliva, for cleavage of Hst 5.</text>
    </phDependence>
</comment>
<comment type="subunit">
    <text evidence="1">Monomer.</text>
</comment>
<comment type="subcellular location">
    <subcellularLocation>
        <location evidence="6 23 25">Secreted</location>
    </subcellularLocation>
</comment>
<comment type="induction">
    <text evidence="5 11 13 18 20">Expressed during development of germ tubes, pseudohyphae, true hyphae and opaque cells (PubMed:10569787, PubMed:14555467, PubMed:1620110). Expressed in greater amounts in the mature biofilms compared to early biofilms during inflammatory disorder of the palatal mucosa among denture wearers (PubMed:22302440). Regulated by growth phase and alpha-pheromones (PubMed:23484407).</text>
</comment>
<comment type="similarity">
    <text evidence="30">Belongs to the peptidase A1 family.</text>
</comment>
<organism>
    <name type="scientific">Candida albicans (strain SC5314 / ATCC MYA-2876)</name>
    <name type="common">Yeast</name>
    <dbReference type="NCBI Taxonomy" id="237561"/>
    <lineage>
        <taxon>Eukaryota</taxon>
        <taxon>Fungi</taxon>
        <taxon>Dikarya</taxon>
        <taxon>Ascomycota</taxon>
        <taxon>Saccharomycotina</taxon>
        <taxon>Pichiomycetes</taxon>
        <taxon>Debaryomycetaceae</taxon>
        <taxon>Candida/Lodderomyces clade</taxon>
        <taxon>Candida</taxon>
    </lineage>
</organism>
<name>CARP1_CANAL</name>